<proteinExistence type="inferred from homology"/>
<sequence length="174" mass="19968">MRPVAPEKDGPRVNEEIRIREVQLIDQDGQNRGVVAIRDALTLAQEAGLDLVEISPNSAPPVCKILDYGRFKYQNQKKASEARKKQKVVEVKEIKLRPGIDTHDYEVKMRSMERFFEEGDKVKVTLRFRGREMAHQDIGFKLLQKLKEDVAAIAKVEAEPMLEGRQMIMILSPR</sequence>
<organism>
    <name type="scientific">Xanthobacter autotrophicus (strain ATCC BAA-1158 / Py2)</name>
    <dbReference type="NCBI Taxonomy" id="78245"/>
    <lineage>
        <taxon>Bacteria</taxon>
        <taxon>Pseudomonadati</taxon>
        <taxon>Pseudomonadota</taxon>
        <taxon>Alphaproteobacteria</taxon>
        <taxon>Hyphomicrobiales</taxon>
        <taxon>Xanthobacteraceae</taxon>
        <taxon>Xanthobacter</taxon>
    </lineage>
</organism>
<keyword id="KW-0963">Cytoplasm</keyword>
<keyword id="KW-0396">Initiation factor</keyword>
<keyword id="KW-0648">Protein biosynthesis</keyword>
<keyword id="KW-1185">Reference proteome</keyword>
<comment type="function">
    <text evidence="1">IF-3 binds to the 30S ribosomal subunit and shifts the equilibrium between 70S ribosomes and their 50S and 30S subunits in favor of the free subunits, thus enhancing the availability of 30S subunits on which protein synthesis initiation begins.</text>
</comment>
<comment type="subunit">
    <text evidence="1">Monomer.</text>
</comment>
<comment type="subcellular location">
    <subcellularLocation>
        <location evidence="1">Cytoplasm</location>
    </subcellularLocation>
</comment>
<comment type="similarity">
    <text evidence="1">Belongs to the IF-3 family.</text>
</comment>
<gene>
    <name evidence="1" type="primary">infC</name>
    <name type="ordered locus">Xaut_1937</name>
</gene>
<reference key="1">
    <citation type="submission" date="2007-07" db="EMBL/GenBank/DDBJ databases">
        <title>Complete sequence of chromosome of Xanthobacter autotrophicus Py2.</title>
        <authorList>
            <consortium name="US DOE Joint Genome Institute"/>
            <person name="Copeland A."/>
            <person name="Lucas S."/>
            <person name="Lapidus A."/>
            <person name="Barry K."/>
            <person name="Glavina del Rio T."/>
            <person name="Hammon N."/>
            <person name="Israni S."/>
            <person name="Dalin E."/>
            <person name="Tice H."/>
            <person name="Pitluck S."/>
            <person name="Sims D."/>
            <person name="Brettin T."/>
            <person name="Bruce D."/>
            <person name="Detter J.C."/>
            <person name="Han C."/>
            <person name="Tapia R."/>
            <person name="Brainard J."/>
            <person name="Schmutz J."/>
            <person name="Larimer F."/>
            <person name="Land M."/>
            <person name="Hauser L."/>
            <person name="Kyrpides N."/>
            <person name="Kim E."/>
            <person name="Ensigns S.A."/>
            <person name="Richardson P."/>
        </authorList>
    </citation>
    <scope>NUCLEOTIDE SEQUENCE [LARGE SCALE GENOMIC DNA]</scope>
    <source>
        <strain>ATCC BAA-1158 / Py2</strain>
    </source>
</reference>
<dbReference type="EMBL" id="CP000781">
    <property type="protein sequence ID" value="ABS67181.1"/>
    <property type="molecule type" value="Genomic_DNA"/>
</dbReference>
<dbReference type="SMR" id="A7IGN8"/>
<dbReference type="STRING" id="78245.Xaut_1937"/>
<dbReference type="KEGG" id="xau:Xaut_1937"/>
<dbReference type="eggNOG" id="COG0290">
    <property type="taxonomic scope" value="Bacteria"/>
</dbReference>
<dbReference type="HOGENOM" id="CLU_054919_3_2_5"/>
<dbReference type="OrthoDB" id="9806014at2"/>
<dbReference type="PhylomeDB" id="A7IGN8"/>
<dbReference type="Proteomes" id="UP000002417">
    <property type="component" value="Chromosome"/>
</dbReference>
<dbReference type="GO" id="GO:0005829">
    <property type="term" value="C:cytosol"/>
    <property type="evidence" value="ECO:0007669"/>
    <property type="project" value="TreeGrafter"/>
</dbReference>
<dbReference type="GO" id="GO:0016020">
    <property type="term" value="C:membrane"/>
    <property type="evidence" value="ECO:0007669"/>
    <property type="project" value="TreeGrafter"/>
</dbReference>
<dbReference type="GO" id="GO:0043022">
    <property type="term" value="F:ribosome binding"/>
    <property type="evidence" value="ECO:0007669"/>
    <property type="project" value="TreeGrafter"/>
</dbReference>
<dbReference type="GO" id="GO:0003743">
    <property type="term" value="F:translation initiation factor activity"/>
    <property type="evidence" value="ECO:0007669"/>
    <property type="project" value="UniProtKB-UniRule"/>
</dbReference>
<dbReference type="GO" id="GO:0032790">
    <property type="term" value="P:ribosome disassembly"/>
    <property type="evidence" value="ECO:0007669"/>
    <property type="project" value="TreeGrafter"/>
</dbReference>
<dbReference type="FunFam" id="3.10.20.80:FF:000001">
    <property type="entry name" value="Translation initiation factor IF-3"/>
    <property type="match status" value="1"/>
</dbReference>
<dbReference type="FunFam" id="3.30.110.10:FF:000001">
    <property type="entry name" value="Translation initiation factor IF-3"/>
    <property type="match status" value="1"/>
</dbReference>
<dbReference type="Gene3D" id="3.30.110.10">
    <property type="entry name" value="Translation initiation factor 3 (IF-3), C-terminal domain"/>
    <property type="match status" value="1"/>
</dbReference>
<dbReference type="Gene3D" id="3.10.20.80">
    <property type="entry name" value="Translation initiation factor 3 (IF-3), N-terminal domain"/>
    <property type="match status" value="1"/>
</dbReference>
<dbReference type="HAMAP" id="MF_00080">
    <property type="entry name" value="IF_3"/>
    <property type="match status" value="1"/>
</dbReference>
<dbReference type="InterPro" id="IPR036788">
    <property type="entry name" value="T_IF-3_C_sf"/>
</dbReference>
<dbReference type="InterPro" id="IPR036787">
    <property type="entry name" value="T_IF-3_N_sf"/>
</dbReference>
<dbReference type="InterPro" id="IPR019813">
    <property type="entry name" value="Translation_initiation_fac3_CS"/>
</dbReference>
<dbReference type="InterPro" id="IPR001288">
    <property type="entry name" value="Translation_initiation_fac_3"/>
</dbReference>
<dbReference type="InterPro" id="IPR019815">
    <property type="entry name" value="Translation_initiation_fac_3_C"/>
</dbReference>
<dbReference type="InterPro" id="IPR019814">
    <property type="entry name" value="Translation_initiation_fac_3_N"/>
</dbReference>
<dbReference type="NCBIfam" id="TIGR00168">
    <property type="entry name" value="infC"/>
    <property type="match status" value="1"/>
</dbReference>
<dbReference type="PANTHER" id="PTHR10938">
    <property type="entry name" value="TRANSLATION INITIATION FACTOR IF-3"/>
    <property type="match status" value="1"/>
</dbReference>
<dbReference type="PANTHER" id="PTHR10938:SF0">
    <property type="entry name" value="TRANSLATION INITIATION FACTOR IF-3, MITOCHONDRIAL"/>
    <property type="match status" value="1"/>
</dbReference>
<dbReference type="Pfam" id="PF00707">
    <property type="entry name" value="IF3_C"/>
    <property type="match status" value="1"/>
</dbReference>
<dbReference type="Pfam" id="PF05198">
    <property type="entry name" value="IF3_N"/>
    <property type="match status" value="1"/>
</dbReference>
<dbReference type="SUPFAM" id="SSF55200">
    <property type="entry name" value="Translation initiation factor IF3, C-terminal domain"/>
    <property type="match status" value="1"/>
</dbReference>
<dbReference type="SUPFAM" id="SSF54364">
    <property type="entry name" value="Translation initiation factor IF3, N-terminal domain"/>
    <property type="match status" value="1"/>
</dbReference>
<dbReference type="PROSITE" id="PS00938">
    <property type="entry name" value="IF3"/>
    <property type="match status" value="1"/>
</dbReference>
<evidence type="ECO:0000255" key="1">
    <source>
        <dbReference type="HAMAP-Rule" id="MF_00080"/>
    </source>
</evidence>
<protein>
    <recommendedName>
        <fullName evidence="1">Translation initiation factor IF-3</fullName>
    </recommendedName>
</protein>
<feature type="chain" id="PRO_1000092790" description="Translation initiation factor IF-3">
    <location>
        <begin position="1"/>
        <end position="174"/>
    </location>
</feature>
<name>IF3_XANP2</name>
<accession>A7IGN8</accession>